<protein>
    <recommendedName>
        <fullName>Secretory carrier-associated membrane protein 1</fullName>
        <shortName>AtSC1</shortName>
        <shortName>Secretory carrier membrane protein 1</shortName>
    </recommendedName>
</protein>
<accession>Q9SKT3</accession>
<organism>
    <name type="scientific">Arabidopsis thaliana</name>
    <name type="common">Mouse-ear cress</name>
    <dbReference type="NCBI Taxonomy" id="3702"/>
    <lineage>
        <taxon>Eukaryota</taxon>
        <taxon>Viridiplantae</taxon>
        <taxon>Streptophyta</taxon>
        <taxon>Embryophyta</taxon>
        <taxon>Tracheophyta</taxon>
        <taxon>Spermatophyta</taxon>
        <taxon>Magnoliopsida</taxon>
        <taxon>eudicotyledons</taxon>
        <taxon>Gunneridae</taxon>
        <taxon>Pentapetalae</taxon>
        <taxon>rosids</taxon>
        <taxon>malvids</taxon>
        <taxon>Brassicales</taxon>
        <taxon>Brassicaceae</taxon>
        <taxon>Camelineae</taxon>
        <taxon>Arabidopsis</taxon>
    </lineage>
</organism>
<feature type="chain" id="PRO_0000304900" description="Secretory carrier-associated membrane protein 1">
    <location>
        <begin position="1"/>
        <end position="282"/>
    </location>
</feature>
<feature type="topological domain" description="Cytoplasmic" evidence="3">
    <location>
        <begin position="1"/>
        <end position="117"/>
    </location>
</feature>
<feature type="transmembrane region" description="Helical" evidence="3">
    <location>
        <begin position="118"/>
        <end position="138"/>
    </location>
</feature>
<feature type="transmembrane region" description="Helical" evidence="3">
    <location>
        <begin position="150"/>
        <end position="170"/>
    </location>
</feature>
<feature type="transmembrane region" description="Helical" evidence="3">
    <location>
        <begin position="185"/>
        <end position="205"/>
    </location>
</feature>
<feature type="transmembrane region" description="Helical" evidence="3">
    <location>
        <begin position="233"/>
        <end position="253"/>
    </location>
</feature>
<feature type="topological domain" description="Cytoplasmic" evidence="3">
    <location>
        <begin position="254"/>
        <end position="282"/>
    </location>
</feature>
<feature type="region of interest" description="Disordered" evidence="4">
    <location>
        <begin position="1"/>
        <end position="49"/>
    </location>
</feature>
<feature type="coiled-coil region" evidence="3">
    <location>
        <begin position="48"/>
        <end position="93"/>
    </location>
</feature>
<feature type="compositionally biased region" description="Polar residues" evidence="4">
    <location>
        <begin position="18"/>
        <end position="30"/>
    </location>
</feature>
<feature type="modified residue" description="Phosphoserine" evidence="2">
    <location>
        <position position="31"/>
    </location>
</feature>
<gene>
    <name type="primary">SCAMP1</name>
    <name type="synonym">SC1</name>
    <name type="ordered locus">At2g20840</name>
    <name type="ORF">F5H14.19</name>
</gene>
<dbReference type="EMBL" id="AC006234">
    <property type="protein sequence ID" value="AAD20911.1"/>
    <property type="molecule type" value="Genomic_DNA"/>
</dbReference>
<dbReference type="EMBL" id="CP002685">
    <property type="protein sequence ID" value="AEC07086.1"/>
    <property type="molecule type" value="Genomic_DNA"/>
</dbReference>
<dbReference type="EMBL" id="BT012642">
    <property type="protein sequence ID" value="AAT06461.1"/>
    <property type="molecule type" value="mRNA"/>
</dbReference>
<dbReference type="EMBL" id="AK221723">
    <property type="protein sequence ID" value="BAD93720.1"/>
    <property type="molecule type" value="mRNA"/>
</dbReference>
<dbReference type="PIR" id="A84594">
    <property type="entry name" value="A84594"/>
</dbReference>
<dbReference type="RefSeq" id="NP_179680.1">
    <property type="nucleotide sequence ID" value="NM_127653.5"/>
</dbReference>
<dbReference type="SMR" id="Q9SKT3"/>
<dbReference type="FunCoup" id="Q9SKT3">
    <property type="interactions" value="2029"/>
</dbReference>
<dbReference type="STRING" id="3702.Q9SKT3"/>
<dbReference type="TCDB" id="8.A.103.1.6">
    <property type="family name" value="the secretory carrier-associated membrane protein (scamp) family"/>
</dbReference>
<dbReference type="GlyGen" id="Q9SKT3">
    <property type="glycosylation" value="1 site"/>
</dbReference>
<dbReference type="iPTMnet" id="Q9SKT3"/>
<dbReference type="PaxDb" id="3702-AT2G20840.1"/>
<dbReference type="ProteomicsDB" id="232768"/>
<dbReference type="EnsemblPlants" id="AT2G20840.1">
    <property type="protein sequence ID" value="AT2G20840.1"/>
    <property type="gene ID" value="AT2G20840"/>
</dbReference>
<dbReference type="GeneID" id="816617"/>
<dbReference type="Gramene" id="AT2G20840.1">
    <property type="protein sequence ID" value="AT2G20840.1"/>
    <property type="gene ID" value="AT2G20840"/>
</dbReference>
<dbReference type="KEGG" id="ath:AT2G20840"/>
<dbReference type="Araport" id="AT2G20840"/>
<dbReference type="TAIR" id="AT2G20840">
    <property type="gene designation" value="SCAMP3"/>
</dbReference>
<dbReference type="eggNOG" id="KOG3088">
    <property type="taxonomic scope" value="Eukaryota"/>
</dbReference>
<dbReference type="HOGENOM" id="CLU_066546_3_0_1"/>
<dbReference type="InParanoid" id="Q9SKT3"/>
<dbReference type="OMA" id="IFFAQVC"/>
<dbReference type="OrthoDB" id="242866at2759"/>
<dbReference type="PhylomeDB" id="Q9SKT3"/>
<dbReference type="PRO" id="PR:Q9SKT3"/>
<dbReference type="Proteomes" id="UP000006548">
    <property type="component" value="Chromosome 2"/>
</dbReference>
<dbReference type="ExpressionAtlas" id="Q9SKT3">
    <property type="expression patterns" value="baseline and differential"/>
</dbReference>
<dbReference type="GO" id="GO:0005886">
    <property type="term" value="C:plasma membrane"/>
    <property type="evidence" value="ECO:0007005"/>
    <property type="project" value="TAIR"/>
</dbReference>
<dbReference type="GO" id="GO:0030658">
    <property type="term" value="C:transport vesicle membrane"/>
    <property type="evidence" value="ECO:0007669"/>
    <property type="project" value="UniProtKB-SubCell"/>
</dbReference>
<dbReference type="GO" id="GO:0015031">
    <property type="term" value="P:protein transport"/>
    <property type="evidence" value="ECO:0007669"/>
    <property type="project" value="InterPro"/>
</dbReference>
<dbReference type="InterPro" id="IPR007273">
    <property type="entry name" value="SCAMP"/>
</dbReference>
<dbReference type="PANTHER" id="PTHR10687:SF76">
    <property type="entry name" value="SECRETORY CARRIER-ASSOCIATED MEMBRANE PROTEIN 1"/>
    <property type="match status" value="1"/>
</dbReference>
<dbReference type="PANTHER" id="PTHR10687">
    <property type="entry name" value="SECRETORY CARRIER-ASSOCIATED MEMBRANE PROTEIN SCAMP"/>
    <property type="match status" value="1"/>
</dbReference>
<dbReference type="Pfam" id="PF04144">
    <property type="entry name" value="SCAMP"/>
    <property type="match status" value="1"/>
</dbReference>
<evidence type="ECO:0000250" key="1"/>
<evidence type="ECO:0000250" key="2">
    <source>
        <dbReference type="UniProtKB" id="Q9M5P2"/>
    </source>
</evidence>
<evidence type="ECO:0000255" key="3"/>
<evidence type="ECO:0000256" key="4">
    <source>
        <dbReference type="SAM" id="MobiDB-lite"/>
    </source>
</evidence>
<evidence type="ECO:0000305" key="5"/>
<proteinExistence type="evidence at transcript level"/>
<sequence>MSRYQSHSFDDGEINPFANPTSVPAATSKLSPLPPEPYDRGATMDIPLDSGKDLKAKEKELREKEAELKRREQEIKRKEDAIAQAGIVIEEKNWPPFFPLIHHDISNEIPIHLQRIQYVAFTSMLGLVVCLLWNIVAVTTAWIKGEGPTIWFLAIIYFISGVPGAYVMWYRPLYRAMRTDSALKFGWFFFTYLFHIAFCVFAAVAPPIIFKGKSLTGILPAIDVLSGNILVGIFYFIGFGFFCLESLVSIWVIQQVYMYFRGSGKAAEMKQEATRRAMMAAL</sequence>
<reference key="1">
    <citation type="journal article" date="1999" name="Nature">
        <title>Sequence and analysis of chromosome 2 of the plant Arabidopsis thaliana.</title>
        <authorList>
            <person name="Lin X."/>
            <person name="Kaul S."/>
            <person name="Rounsley S.D."/>
            <person name="Shea T.P."/>
            <person name="Benito M.-I."/>
            <person name="Town C.D."/>
            <person name="Fujii C.Y."/>
            <person name="Mason T.M."/>
            <person name="Bowman C.L."/>
            <person name="Barnstead M.E."/>
            <person name="Feldblyum T.V."/>
            <person name="Buell C.R."/>
            <person name="Ketchum K.A."/>
            <person name="Lee J.J."/>
            <person name="Ronning C.M."/>
            <person name="Koo H.L."/>
            <person name="Moffat K.S."/>
            <person name="Cronin L.A."/>
            <person name="Shen M."/>
            <person name="Pai G."/>
            <person name="Van Aken S."/>
            <person name="Umayam L."/>
            <person name="Tallon L.J."/>
            <person name="Gill J.E."/>
            <person name="Adams M.D."/>
            <person name="Carrera A.J."/>
            <person name="Creasy T.H."/>
            <person name="Goodman H.M."/>
            <person name="Somerville C.R."/>
            <person name="Copenhaver G.P."/>
            <person name="Preuss D."/>
            <person name="Nierman W.C."/>
            <person name="White O."/>
            <person name="Eisen J.A."/>
            <person name="Salzberg S.L."/>
            <person name="Fraser C.M."/>
            <person name="Venter J.C."/>
        </authorList>
    </citation>
    <scope>NUCLEOTIDE SEQUENCE [LARGE SCALE GENOMIC DNA]</scope>
    <source>
        <strain>cv. Columbia</strain>
    </source>
</reference>
<reference key="2">
    <citation type="journal article" date="2017" name="Plant J.">
        <title>Araport11: a complete reannotation of the Arabidopsis thaliana reference genome.</title>
        <authorList>
            <person name="Cheng C.Y."/>
            <person name="Krishnakumar V."/>
            <person name="Chan A.P."/>
            <person name="Thibaud-Nissen F."/>
            <person name="Schobel S."/>
            <person name="Town C.D."/>
        </authorList>
    </citation>
    <scope>GENOME REANNOTATION</scope>
    <source>
        <strain>cv. Columbia</strain>
    </source>
</reference>
<reference key="3">
    <citation type="submission" date="2004-05" db="EMBL/GenBank/DDBJ databases">
        <title>Arabidopsis ORF clones.</title>
        <authorList>
            <person name="Shinn P."/>
            <person name="Chen H."/>
            <person name="Cheuk R.F."/>
            <person name="Kim C.J."/>
            <person name="Carninci P."/>
            <person name="Hayashizaki Y."/>
            <person name="Ishida J."/>
            <person name="Kamiya A."/>
            <person name="Kawai J."/>
            <person name="Narusaka M."/>
            <person name="Sakurai T."/>
            <person name="Satou M."/>
            <person name="Seki M."/>
            <person name="Shinozaki K."/>
            <person name="Ecker J.R."/>
        </authorList>
    </citation>
    <scope>NUCLEOTIDE SEQUENCE [LARGE SCALE MRNA]</scope>
    <source>
        <strain>cv. Columbia</strain>
    </source>
</reference>
<reference key="4">
    <citation type="submission" date="2005-03" db="EMBL/GenBank/DDBJ databases">
        <title>Large-scale analysis of RIKEN Arabidopsis full-length (RAFL) cDNAs.</title>
        <authorList>
            <person name="Totoki Y."/>
            <person name="Seki M."/>
            <person name="Ishida J."/>
            <person name="Nakajima M."/>
            <person name="Enju A."/>
            <person name="Kamiya A."/>
            <person name="Narusaka M."/>
            <person name="Shin-i T."/>
            <person name="Nakagawa M."/>
            <person name="Sakamoto N."/>
            <person name="Oishi K."/>
            <person name="Kohara Y."/>
            <person name="Kobayashi M."/>
            <person name="Toyoda A."/>
            <person name="Sakaki Y."/>
            <person name="Sakurai T."/>
            <person name="Iida K."/>
            <person name="Akiyama K."/>
            <person name="Satou M."/>
            <person name="Toyoda T."/>
            <person name="Konagaya A."/>
            <person name="Carninci P."/>
            <person name="Kawai J."/>
            <person name="Hayashizaki Y."/>
            <person name="Shinozaki K."/>
        </authorList>
    </citation>
    <scope>NUCLEOTIDE SEQUENCE [LARGE SCALE MRNA]</scope>
    <source>
        <strain>cv. Columbia</strain>
    </source>
</reference>
<reference key="5">
    <citation type="journal article" date="2000" name="Mol. Biol. Cell">
        <title>The secretory carrier membrane protein family: structure and membrane topology.</title>
        <authorList>
            <person name="Hubbard C."/>
            <person name="Singleton D."/>
            <person name="Rauch M."/>
            <person name="Jayasinghe S."/>
            <person name="Cafiso D."/>
            <person name="Castle D."/>
        </authorList>
    </citation>
    <scope>GENE FAMILY</scope>
    <scope>NOMENCLATURE</scope>
</reference>
<comment type="function">
    <text evidence="1">Probably involved in membrane trafficking.</text>
</comment>
<comment type="subcellular location">
    <subcellularLocation>
        <location evidence="1">Cell membrane</location>
        <topology evidence="1">Multi-pass membrane protein</topology>
    </subcellularLocation>
    <subcellularLocation>
        <location evidence="1">Cytoplasmic vesicle</location>
        <location evidence="1">Secretory vesicle membrane</location>
        <topology evidence="1">Multi-pass membrane protein</topology>
    </subcellularLocation>
</comment>
<comment type="similarity">
    <text evidence="5">Belongs to the SCAMP family.</text>
</comment>
<name>SCAM1_ARATH</name>
<keyword id="KW-1003">Cell membrane</keyword>
<keyword id="KW-0175">Coiled coil</keyword>
<keyword id="KW-0968">Cytoplasmic vesicle</keyword>
<keyword id="KW-0472">Membrane</keyword>
<keyword id="KW-0597">Phosphoprotein</keyword>
<keyword id="KW-1185">Reference proteome</keyword>
<keyword id="KW-0812">Transmembrane</keyword>
<keyword id="KW-1133">Transmembrane helix</keyword>
<keyword id="KW-0813">Transport</keyword>